<reference key="1">
    <citation type="journal article" date="2007" name="Photosyn. Res.">
        <title>Complete nucleotide sequence of the freshwater unicellular cyanobacterium Synechococcus elongatus PCC 6301 chromosome: gene content and organization.</title>
        <authorList>
            <person name="Sugita C."/>
            <person name="Ogata K."/>
            <person name="Shikata M."/>
            <person name="Jikuya H."/>
            <person name="Takano J."/>
            <person name="Furumichi M."/>
            <person name="Kanehisa M."/>
            <person name="Omata T."/>
            <person name="Sugiura M."/>
            <person name="Sugita M."/>
        </authorList>
    </citation>
    <scope>NUCLEOTIDE SEQUENCE [LARGE SCALE GENOMIC DNA]</scope>
    <source>
        <strain>ATCC 27144 / PCC 6301 / SAUG 1402/1</strain>
    </source>
</reference>
<organism>
    <name type="scientific">Synechococcus sp. (strain ATCC 27144 / PCC 6301 / SAUG 1402/1)</name>
    <name type="common">Anacystis nidulans</name>
    <dbReference type="NCBI Taxonomy" id="269084"/>
    <lineage>
        <taxon>Bacteria</taxon>
        <taxon>Bacillati</taxon>
        <taxon>Cyanobacteriota</taxon>
        <taxon>Cyanophyceae</taxon>
        <taxon>Synechococcales</taxon>
        <taxon>Synechococcaceae</taxon>
        <taxon>Synechococcus</taxon>
    </lineage>
</organism>
<name>RS10_SYNP6</name>
<accession>Q5N4C2</accession>
<evidence type="ECO:0000255" key="1">
    <source>
        <dbReference type="HAMAP-Rule" id="MF_00508"/>
    </source>
</evidence>
<evidence type="ECO:0000305" key="2"/>
<protein>
    <recommendedName>
        <fullName evidence="1">Small ribosomal subunit protein uS10</fullName>
    </recommendedName>
    <alternativeName>
        <fullName evidence="2">30S ribosomal protein S10</fullName>
    </alternativeName>
</protein>
<sequence length="105" mass="12179">MATLQQQKIRIRLKAFDRRLLDTSCDRIVETANRTNATAIGPIPLPTRRRIYCVLRSPHVDKDSREHFETRTHRRIIDIYQPSSKTIDALMKLDLPAGVDIEVKL</sequence>
<proteinExistence type="inferred from homology"/>
<dbReference type="EMBL" id="AP008231">
    <property type="protein sequence ID" value="BAD78847.1"/>
    <property type="molecule type" value="Genomic_DNA"/>
</dbReference>
<dbReference type="RefSeq" id="WP_011242969.1">
    <property type="nucleotide sequence ID" value="NZ_CP085785.1"/>
</dbReference>
<dbReference type="SMR" id="Q5N4C2"/>
<dbReference type="GeneID" id="72429732"/>
<dbReference type="KEGG" id="syc:syc0657_d"/>
<dbReference type="eggNOG" id="COG0051">
    <property type="taxonomic scope" value="Bacteria"/>
</dbReference>
<dbReference type="Proteomes" id="UP000001175">
    <property type="component" value="Chromosome"/>
</dbReference>
<dbReference type="GO" id="GO:1990904">
    <property type="term" value="C:ribonucleoprotein complex"/>
    <property type="evidence" value="ECO:0007669"/>
    <property type="project" value="UniProtKB-KW"/>
</dbReference>
<dbReference type="GO" id="GO:0005840">
    <property type="term" value="C:ribosome"/>
    <property type="evidence" value="ECO:0007669"/>
    <property type="project" value="UniProtKB-KW"/>
</dbReference>
<dbReference type="GO" id="GO:0003735">
    <property type="term" value="F:structural constituent of ribosome"/>
    <property type="evidence" value="ECO:0007669"/>
    <property type="project" value="InterPro"/>
</dbReference>
<dbReference type="GO" id="GO:0000049">
    <property type="term" value="F:tRNA binding"/>
    <property type="evidence" value="ECO:0007669"/>
    <property type="project" value="UniProtKB-UniRule"/>
</dbReference>
<dbReference type="GO" id="GO:0006412">
    <property type="term" value="P:translation"/>
    <property type="evidence" value="ECO:0007669"/>
    <property type="project" value="UniProtKB-UniRule"/>
</dbReference>
<dbReference type="FunFam" id="3.30.70.600:FF:000001">
    <property type="entry name" value="30S ribosomal protein S10"/>
    <property type="match status" value="1"/>
</dbReference>
<dbReference type="Gene3D" id="3.30.70.600">
    <property type="entry name" value="Ribosomal protein S10 domain"/>
    <property type="match status" value="1"/>
</dbReference>
<dbReference type="HAMAP" id="MF_00508">
    <property type="entry name" value="Ribosomal_uS10"/>
    <property type="match status" value="1"/>
</dbReference>
<dbReference type="InterPro" id="IPR001848">
    <property type="entry name" value="Ribosomal_uS10"/>
</dbReference>
<dbReference type="InterPro" id="IPR018268">
    <property type="entry name" value="Ribosomal_uS10_CS"/>
</dbReference>
<dbReference type="InterPro" id="IPR027486">
    <property type="entry name" value="Ribosomal_uS10_dom"/>
</dbReference>
<dbReference type="InterPro" id="IPR036838">
    <property type="entry name" value="Ribosomal_uS10_dom_sf"/>
</dbReference>
<dbReference type="NCBIfam" id="NF001861">
    <property type="entry name" value="PRK00596.1"/>
    <property type="match status" value="1"/>
</dbReference>
<dbReference type="NCBIfam" id="TIGR01049">
    <property type="entry name" value="rpsJ_bact"/>
    <property type="match status" value="1"/>
</dbReference>
<dbReference type="PANTHER" id="PTHR11700">
    <property type="entry name" value="30S RIBOSOMAL PROTEIN S10 FAMILY MEMBER"/>
    <property type="match status" value="1"/>
</dbReference>
<dbReference type="Pfam" id="PF00338">
    <property type="entry name" value="Ribosomal_S10"/>
    <property type="match status" value="1"/>
</dbReference>
<dbReference type="PRINTS" id="PR00971">
    <property type="entry name" value="RIBOSOMALS10"/>
</dbReference>
<dbReference type="SMART" id="SM01403">
    <property type="entry name" value="Ribosomal_S10"/>
    <property type="match status" value="1"/>
</dbReference>
<dbReference type="SUPFAM" id="SSF54999">
    <property type="entry name" value="Ribosomal protein S10"/>
    <property type="match status" value="1"/>
</dbReference>
<dbReference type="PROSITE" id="PS00361">
    <property type="entry name" value="RIBOSOMAL_S10"/>
    <property type="match status" value="1"/>
</dbReference>
<feature type="chain" id="PRO_0000237109" description="Small ribosomal subunit protein uS10">
    <location>
        <begin position="1"/>
        <end position="105"/>
    </location>
</feature>
<keyword id="KW-0687">Ribonucleoprotein</keyword>
<keyword id="KW-0689">Ribosomal protein</keyword>
<gene>
    <name evidence="1" type="primary">rpsJ</name>
    <name evidence="1" type="synonym">rps10</name>
    <name type="ordered locus">syc0657_d</name>
</gene>
<comment type="function">
    <text evidence="1">Involved in the binding of tRNA to the ribosomes.</text>
</comment>
<comment type="subunit">
    <text evidence="1">Part of the 30S ribosomal subunit.</text>
</comment>
<comment type="similarity">
    <text evidence="1">Belongs to the universal ribosomal protein uS10 family.</text>
</comment>